<gene>
    <name type="primary">ATP6V0D2</name>
</gene>
<organism>
    <name type="scientific">Bos taurus</name>
    <name type="common">Bovine</name>
    <dbReference type="NCBI Taxonomy" id="9913"/>
    <lineage>
        <taxon>Eukaryota</taxon>
        <taxon>Metazoa</taxon>
        <taxon>Chordata</taxon>
        <taxon>Craniata</taxon>
        <taxon>Vertebrata</taxon>
        <taxon>Euteleostomi</taxon>
        <taxon>Mammalia</taxon>
        <taxon>Eutheria</taxon>
        <taxon>Laurasiatheria</taxon>
        <taxon>Artiodactyla</taxon>
        <taxon>Ruminantia</taxon>
        <taxon>Pecora</taxon>
        <taxon>Bovidae</taxon>
        <taxon>Bovinae</taxon>
        <taxon>Bos</taxon>
    </lineage>
</organism>
<feature type="chain" id="PRO_0000285656" description="V-type proton ATPase subunit d 2">
    <location>
        <begin position="1"/>
        <end position="351"/>
    </location>
</feature>
<sequence>MLESAELNFNADHGYLEGLVRGCKAGLLTRRDYVNLVQCENLEDLKIHLQTTDYGNFLANQATPLTVSVIDTEMRKKLCREFEYFRNHSLEPLSTFFTYMTCSYMIDNVILLMNGALQNKPVKDVLVKCHPLGHFTEMEAVNIAETPSDLFNAILVETPLAPFFQDCTSENALDELNIEILRNKLYKSYIEAFYKFCKNHGDVTAEVMCPILEFEADRRAFIITLNSFGTELSKEDRETLYPTCGKLHPEGLRLLAQAEDFEQMKRVADSYGVYKPLFEAVSDSSGGKTLEDVFYEREVQMNVLAFNRQFHYGVFYAYTKLKEQEMRNIVWIAECISQRQRTKINSYIPIL</sequence>
<proteinExistence type="evidence at transcript level"/>
<evidence type="ECO:0000250" key="1">
    <source>
        <dbReference type="UniProtKB" id="P61420"/>
    </source>
</evidence>
<evidence type="ECO:0000250" key="2">
    <source>
        <dbReference type="UniProtKB" id="Q80SY3"/>
    </source>
</evidence>
<evidence type="ECO:0000305" key="3"/>
<reference key="1">
    <citation type="submission" date="2005-09" db="EMBL/GenBank/DDBJ databases">
        <authorList>
            <consortium name="NIH - Mammalian Gene Collection (MGC) project"/>
        </authorList>
    </citation>
    <scope>NUCLEOTIDE SEQUENCE [LARGE SCALE MRNA]</scope>
    <source>
        <strain>Hereford</strain>
        <tissue>Thymus</tissue>
    </source>
</reference>
<protein>
    <recommendedName>
        <fullName>V-type proton ATPase subunit d 2</fullName>
        <shortName>V-ATPase subunit d 2</shortName>
    </recommendedName>
    <alternativeName>
        <fullName>Vacuolar proton pump subunit d 2</fullName>
    </alternativeName>
</protein>
<name>VA0D2_BOVIN</name>
<keyword id="KW-0375">Hydrogen ion transport</keyword>
<keyword id="KW-0406">Ion transport</keyword>
<keyword id="KW-1185">Reference proteome</keyword>
<keyword id="KW-0813">Transport</keyword>
<comment type="function">
    <text evidence="1 2">Subunit of the V0 complex of vacuolar(H+)-ATPase (V-ATPase), a multisubunit enzyme composed of a peripheral complex (V1) that hydrolyzes ATP and a membrane integral complex (V0) that translocates protons (By similarity). V-ATPase is responsible for acidifying and maintaining the pH of intracellular compartments and in some cell types, is targeted to the plasma membrane, where it is responsible for acidifying the extracellular environment (By similarity). May play a role in coupling of proton transport and ATP hydrolysis (By similarity). Regulator of osteoclast fusion and bone formation (By similarity).</text>
</comment>
<comment type="subunit">
    <text evidence="1 2">V-ATPase is a heteromultimeric enzyme made up of two complexes: the ATP-hydrolytic V1 complex and the proton translocation V0 complex (By similarity). The V1 complex consists of three catalytic AB heterodimers that form a heterohexamer, three peripheral stalks each consisting of EG heterodimers, one central rotor including subunits D and F, and the regulatory subunits C and H (By similarity). The proton translocation complex V0 consists of the proton transport subunit a, a ring of proteolipid subunits c9c'', rotary subunit d, subunits e and f, and the accessory subunits ATP6AP1/Ac45 and ATP6AP2/PRR (By similarity). Interacts with TM4SF19; this interaction inhibits V1-V0 complex assembly (By similarity).</text>
</comment>
<comment type="similarity">
    <text evidence="3">Belongs to the V-ATPase V0D/AC39 subunit family.</text>
</comment>
<accession>Q2KJB6</accession>
<dbReference type="EMBL" id="BC105425">
    <property type="protein sequence ID" value="AAI05426.1"/>
    <property type="molecule type" value="mRNA"/>
</dbReference>
<dbReference type="RefSeq" id="NP_001039566.1">
    <property type="nucleotide sequence ID" value="NM_001046101.1"/>
</dbReference>
<dbReference type="SMR" id="Q2KJB6"/>
<dbReference type="FunCoup" id="Q2KJB6">
    <property type="interactions" value="654"/>
</dbReference>
<dbReference type="STRING" id="9913.ENSBTAP00000028091"/>
<dbReference type="PaxDb" id="9913-ENSBTAP00000028091"/>
<dbReference type="Ensembl" id="ENSBTAT00000028091.7">
    <property type="protein sequence ID" value="ENSBTAP00000028091.5"/>
    <property type="gene ID" value="ENSBTAG00000021092.7"/>
</dbReference>
<dbReference type="GeneID" id="511839"/>
<dbReference type="KEGG" id="bta:511839"/>
<dbReference type="CTD" id="245972"/>
<dbReference type="VEuPathDB" id="HostDB:ENSBTAG00000021092"/>
<dbReference type="VGNC" id="VGNC:26313">
    <property type="gene designation" value="ATP6V0D2"/>
</dbReference>
<dbReference type="eggNOG" id="KOG2957">
    <property type="taxonomic scope" value="Eukaryota"/>
</dbReference>
<dbReference type="GeneTree" id="ENSGT00390000002200"/>
<dbReference type="HOGENOM" id="CLU_051277_0_0_1"/>
<dbReference type="InParanoid" id="Q2KJB6"/>
<dbReference type="OMA" id="ETLFPTC"/>
<dbReference type="OrthoDB" id="10250083at2759"/>
<dbReference type="TreeFam" id="TF300857"/>
<dbReference type="Reactome" id="R-BTA-1222556">
    <property type="pathway name" value="ROS and RNS production in phagocytes"/>
</dbReference>
<dbReference type="Reactome" id="R-BTA-77387">
    <property type="pathway name" value="Insulin receptor recycling"/>
</dbReference>
<dbReference type="Reactome" id="R-BTA-917977">
    <property type="pathway name" value="Transferrin endocytosis and recycling"/>
</dbReference>
<dbReference type="Reactome" id="R-BTA-9639288">
    <property type="pathway name" value="Amino acids regulate mTORC1"/>
</dbReference>
<dbReference type="Reactome" id="R-BTA-983712">
    <property type="pathway name" value="Ion channel transport"/>
</dbReference>
<dbReference type="Proteomes" id="UP000009136">
    <property type="component" value="Chromosome 14"/>
</dbReference>
<dbReference type="Bgee" id="ENSBTAG00000021092">
    <property type="expression patterns" value="Expressed in pigment epithelium of eye and 72 other cell types or tissues"/>
</dbReference>
<dbReference type="GO" id="GO:0016324">
    <property type="term" value="C:apical plasma membrane"/>
    <property type="evidence" value="ECO:0000250"/>
    <property type="project" value="UniProtKB"/>
</dbReference>
<dbReference type="GO" id="GO:0005769">
    <property type="term" value="C:early endosome"/>
    <property type="evidence" value="ECO:0000318"/>
    <property type="project" value="GO_Central"/>
</dbReference>
<dbReference type="GO" id="GO:0033181">
    <property type="term" value="C:plasma membrane proton-transporting V-type ATPase complex"/>
    <property type="evidence" value="ECO:0000318"/>
    <property type="project" value="GO_Central"/>
</dbReference>
<dbReference type="GO" id="GO:0033179">
    <property type="term" value="C:proton-transporting V-type ATPase, V0 domain"/>
    <property type="evidence" value="ECO:0007669"/>
    <property type="project" value="InterPro"/>
</dbReference>
<dbReference type="GO" id="GO:0016471">
    <property type="term" value="C:vacuolar proton-transporting V-type ATPase complex"/>
    <property type="evidence" value="ECO:0000318"/>
    <property type="project" value="GO_Central"/>
</dbReference>
<dbReference type="GO" id="GO:0046961">
    <property type="term" value="F:proton-transporting ATPase activity, rotational mechanism"/>
    <property type="evidence" value="ECO:0007669"/>
    <property type="project" value="InterPro"/>
</dbReference>
<dbReference type="GO" id="GO:0007035">
    <property type="term" value="P:vacuolar acidification"/>
    <property type="evidence" value="ECO:0000318"/>
    <property type="project" value="GO_Central"/>
</dbReference>
<dbReference type="GO" id="GO:0007034">
    <property type="term" value="P:vacuolar transport"/>
    <property type="evidence" value="ECO:0000318"/>
    <property type="project" value="GO_Central"/>
</dbReference>
<dbReference type="FunFam" id="1.20.1690.10:FF:000001">
    <property type="entry name" value="V-type proton ATPase subunit"/>
    <property type="match status" value="1"/>
</dbReference>
<dbReference type="FunFam" id="1.20.1690.10:FF:000003">
    <property type="entry name" value="V-type proton ATPase subunit"/>
    <property type="match status" value="1"/>
</dbReference>
<dbReference type="Gene3D" id="1.10.132.50">
    <property type="entry name" value="ATP synthase (C/AC39) subunit, domain 3"/>
    <property type="match status" value="1"/>
</dbReference>
<dbReference type="Gene3D" id="1.20.1690.10">
    <property type="entry name" value="V-type ATP synthase subunit C domain"/>
    <property type="match status" value="2"/>
</dbReference>
<dbReference type="InterPro" id="IPR036079">
    <property type="entry name" value="ATPase_csu/dsu_sf"/>
</dbReference>
<dbReference type="InterPro" id="IPR002843">
    <property type="entry name" value="ATPase_V0-cplx_csu/dsu"/>
</dbReference>
<dbReference type="InterPro" id="IPR016727">
    <property type="entry name" value="ATPase_V0-cplx_dsu"/>
</dbReference>
<dbReference type="InterPro" id="IPR035067">
    <property type="entry name" value="V-type_ATPase_csu/dsu"/>
</dbReference>
<dbReference type="InterPro" id="IPR044911">
    <property type="entry name" value="V-type_ATPase_csu/dsu_dom_3"/>
</dbReference>
<dbReference type="PANTHER" id="PTHR11028">
    <property type="entry name" value="VACUOLAR ATP SYNTHASE SUBUNIT AC39"/>
    <property type="match status" value="1"/>
</dbReference>
<dbReference type="Pfam" id="PF01992">
    <property type="entry name" value="vATP-synt_AC39"/>
    <property type="match status" value="1"/>
</dbReference>
<dbReference type="PIRSF" id="PIRSF018497">
    <property type="entry name" value="V-ATP_synth_D"/>
    <property type="match status" value="1"/>
</dbReference>
<dbReference type="SUPFAM" id="SSF103486">
    <property type="entry name" value="V-type ATP synthase subunit C"/>
    <property type="match status" value="1"/>
</dbReference>